<name>ATPB_RHILW</name>
<proteinExistence type="inferred from homology"/>
<organism>
    <name type="scientific">Rhizobium leguminosarum bv. trifolii (strain WSM2304)</name>
    <dbReference type="NCBI Taxonomy" id="395492"/>
    <lineage>
        <taxon>Bacteria</taxon>
        <taxon>Pseudomonadati</taxon>
        <taxon>Pseudomonadota</taxon>
        <taxon>Alphaproteobacteria</taxon>
        <taxon>Hyphomicrobiales</taxon>
        <taxon>Rhizobiaceae</taxon>
        <taxon>Rhizobium/Agrobacterium group</taxon>
        <taxon>Rhizobium</taxon>
    </lineage>
</organism>
<keyword id="KW-0066">ATP synthesis</keyword>
<keyword id="KW-0067">ATP-binding</keyword>
<keyword id="KW-0997">Cell inner membrane</keyword>
<keyword id="KW-1003">Cell membrane</keyword>
<keyword id="KW-0139">CF(1)</keyword>
<keyword id="KW-0375">Hydrogen ion transport</keyword>
<keyword id="KW-0406">Ion transport</keyword>
<keyword id="KW-0472">Membrane</keyword>
<keyword id="KW-0547">Nucleotide-binding</keyword>
<keyword id="KW-1185">Reference proteome</keyword>
<keyword id="KW-1278">Translocase</keyword>
<keyword id="KW-0813">Transport</keyword>
<reference key="1">
    <citation type="journal article" date="2010" name="Stand. Genomic Sci.">
        <title>Complete genome sequence of Rhizobium leguminosarum bv trifolii strain WSM2304, an effective microsymbiont of the South American clover Trifolium polymorphum.</title>
        <authorList>
            <person name="Reeve W."/>
            <person name="O'Hara G."/>
            <person name="Chain P."/>
            <person name="Ardley J."/>
            <person name="Brau L."/>
            <person name="Nandesena K."/>
            <person name="Tiwari R."/>
            <person name="Malfatti S."/>
            <person name="Kiss H."/>
            <person name="Lapidus A."/>
            <person name="Copeland A."/>
            <person name="Nolan M."/>
            <person name="Land M."/>
            <person name="Ivanova N."/>
            <person name="Mavromatis K."/>
            <person name="Markowitz V."/>
            <person name="Kyrpides N."/>
            <person name="Melino V."/>
            <person name="Denton M."/>
            <person name="Yates R."/>
            <person name="Howieson J."/>
        </authorList>
    </citation>
    <scope>NUCLEOTIDE SEQUENCE [LARGE SCALE GENOMIC DNA]</scope>
    <source>
        <strain>WSM2304</strain>
    </source>
</reference>
<protein>
    <recommendedName>
        <fullName evidence="1">ATP synthase subunit beta</fullName>
        <ecNumber evidence="1">7.1.2.2</ecNumber>
    </recommendedName>
    <alternativeName>
        <fullName evidence="1">ATP synthase F1 sector subunit beta</fullName>
    </alternativeName>
    <alternativeName>
        <fullName evidence="1">F-ATPase subunit beta</fullName>
    </alternativeName>
</protein>
<dbReference type="EC" id="7.1.2.2" evidence="1"/>
<dbReference type="EMBL" id="CP001191">
    <property type="protein sequence ID" value="ACI56915.1"/>
    <property type="molecule type" value="Genomic_DNA"/>
</dbReference>
<dbReference type="RefSeq" id="WP_003589853.1">
    <property type="nucleotide sequence ID" value="NC_011369.1"/>
</dbReference>
<dbReference type="SMR" id="B5ZSN7"/>
<dbReference type="STRING" id="395492.Rleg2_3652"/>
<dbReference type="KEGG" id="rlt:Rleg2_3652"/>
<dbReference type="eggNOG" id="COG0055">
    <property type="taxonomic scope" value="Bacteria"/>
</dbReference>
<dbReference type="HOGENOM" id="CLU_022398_0_2_5"/>
<dbReference type="Proteomes" id="UP000008330">
    <property type="component" value="Chromosome"/>
</dbReference>
<dbReference type="GO" id="GO:0005886">
    <property type="term" value="C:plasma membrane"/>
    <property type="evidence" value="ECO:0007669"/>
    <property type="project" value="UniProtKB-SubCell"/>
</dbReference>
<dbReference type="GO" id="GO:0045259">
    <property type="term" value="C:proton-transporting ATP synthase complex"/>
    <property type="evidence" value="ECO:0007669"/>
    <property type="project" value="UniProtKB-KW"/>
</dbReference>
<dbReference type="GO" id="GO:0005524">
    <property type="term" value="F:ATP binding"/>
    <property type="evidence" value="ECO:0007669"/>
    <property type="project" value="UniProtKB-UniRule"/>
</dbReference>
<dbReference type="GO" id="GO:0016887">
    <property type="term" value="F:ATP hydrolysis activity"/>
    <property type="evidence" value="ECO:0007669"/>
    <property type="project" value="InterPro"/>
</dbReference>
<dbReference type="GO" id="GO:0046933">
    <property type="term" value="F:proton-transporting ATP synthase activity, rotational mechanism"/>
    <property type="evidence" value="ECO:0007669"/>
    <property type="project" value="UniProtKB-UniRule"/>
</dbReference>
<dbReference type="CDD" id="cd18110">
    <property type="entry name" value="ATP-synt_F1_beta_C"/>
    <property type="match status" value="1"/>
</dbReference>
<dbReference type="CDD" id="cd18115">
    <property type="entry name" value="ATP-synt_F1_beta_N"/>
    <property type="match status" value="1"/>
</dbReference>
<dbReference type="CDD" id="cd01133">
    <property type="entry name" value="F1-ATPase_beta_CD"/>
    <property type="match status" value="1"/>
</dbReference>
<dbReference type="FunFam" id="1.10.1140.10:FF:000001">
    <property type="entry name" value="ATP synthase subunit beta"/>
    <property type="match status" value="1"/>
</dbReference>
<dbReference type="FunFam" id="2.40.10.170:FF:000005">
    <property type="entry name" value="ATP synthase subunit beta"/>
    <property type="match status" value="1"/>
</dbReference>
<dbReference type="FunFam" id="3.40.50.300:FF:000026">
    <property type="entry name" value="ATP synthase subunit beta"/>
    <property type="match status" value="1"/>
</dbReference>
<dbReference type="Gene3D" id="2.40.10.170">
    <property type="match status" value="1"/>
</dbReference>
<dbReference type="Gene3D" id="1.10.1140.10">
    <property type="entry name" value="Bovine Mitochondrial F1-atpase, Atp Synthase Beta Chain, Chain D, domain 3"/>
    <property type="match status" value="1"/>
</dbReference>
<dbReference type="Gene3D" id="3.40.50.300">
    <property type="entry name" value="P-loop containing nucleotide triphosphate hydrolases"/>
    <property type="match status" value="1"/>
</dbReference>
<dbReference type="HAMAP" id="MF_01347">
    <property type="entry name" value="ATP_synth_beta_bact"/>
    <property type="match status" value="1"/>
</dbReference>
<dbReference type="InterPro" id="IPR003593">
    <property type="entry name" value="AAA+_ATPase"/>
</dbReference>
<dbReference type="InterPro" id="IPR055190">
    <property type="entry name" value="ATP-synt_VA_C"/>
</dbReference>
<dbReference type="InterPro" id="IPR005722">
    <property type="entry name" value="ATP_synth_F1_bsu"/>
</dbReference>
<dbReference type="InterPro" id="IPR020003">
    <property type="entry name" value="ATPase_a/bsu_AS"/>
</dbReference>
<dbReference type="InterPro" id="IPR050053">
    <property type="entry name" value="ATPase_alpha/beta_chains"/>
</dbReference>
<dbReference type="InterPro" id="IPR004100">
    <property type="entry name" value="ATPase_F1/V1/A1_a/bsu_N"/>
</dbReference>
<dbReference type="InterPro" id="IPR036121">
    <property type="entry name" value="ATPase_F1/V1/A1_a/bsu_N_sf"/>
</dbReference>
<dbReference type="InterPro" id="IPR000194">
    <property type="entry name" value="ATPase_F1/V1/A1_a/bsu_nucl-bd"/>
</dbReference>
<dbReference type="InterPro" id="IPR024034">
    <property type="entry name" value="ATPase_F1/V1_b/a_C"/>
</dbReference>
<dbReference type="InterPro" id="IPR027417">
    <property type="entry name" value="P-loop_NTPase"/>
</dbReference>
<dbReference type="NCBIfam" id="TIGR01039">
    <property type="entry name" value="atpD"/>
    <property type="match status" value="1"/>
</dbReference>
<dbReference type="PANTHER" id="PTHR15184">
    <property type="entry name" value="ATP SYNTHASE"/>
    <property type="match status" value="1"/>
</dbReference>
<dbReference type="PANTHER" id="PTHR15184:SF71">
    <property type="entry name" value="ATP SYNTHASE SUBUNIT BETA, MITOCHONDRIAL"/>
    <property type="match status" value="1"/>
</dbReference>
<dbReference type="Pfam" id="PF00006">
    <property type="entry name" value="ATP-synt_ab"/>
    <property type="match status" value="1"/>
</dbReference>
<dbReference type="Pfam" id="PF02874">
    <property type="entry name" value="ATP-synt_ab_N"/>
    <property type="match status" value="1"/>
</dbReference>
<dbReference type="Pfam" id="PF22919">
    <property type="entry name" value="ATP-synt_VA_C"/>
    <property type="match status" value="1"/>
</dbReference>
<dbReference type="PIRSF" id="PIRSF039072">
    <property type="entry name" value="ATPase_subunit_beta"/>
    <property type="match status" value="1"/>
</dbReference>
<dbReference type="SMART" id="SM00382">
    <property type="entry name" value="AAA"/>
    <property type="match status" value="1"/>
</dbReference>
<dbReference type="SUPFAM" id="SSF47917">
    <property type="entry name" value="C-terminal domain of alpha and beta subunits of F1 ATP synthase"/>
    <property type="match status" value="1"/>
</dbReference>
<dbReference type="SUPFAM" id="SSF50615">
    <property type="entry name" value="N-terminal domain of alpha and beta subunits of F1 ATP synthase"/>
    <property type="match status" value="1"/>
</dbReference>
<dbReference type="SUPFAM" id="SSF52540">
    <property type="entry name" value="P-loop containing nucleoside triphosphate hydrolases"/>
    <property type="match status" value="1"/>
</dbReference>
<dbReference type="PROSITE" id="PS00152">
    <property type="entry name" value="ATPASE_ALPHA_BETA"/>
    <property type="match status" value="1"/>
</dbReference>
<feature type="chain" id="PRO_1000143536" description="ATP synthase subunit beta">
    <location>
        <begin position="1"/>
        <end position="478"/>
    </location>
</feature>
<feature type="binding site" evidence="1">
    <location>
        <begin position="158"/>
        <end position="165"/>
    </location>
    <ligand>
        <name>ATP</name>
        <dbReference type="ChEBI" id="CHEBI:30616"/>
    </ligand>
</feature>
<comment type="function">
    <text evidence="1">Produces ATP from ADP in the presence of a proton gradient across the membrane. The catalytic sites are hosted primarily by the beta subunits.</text>
</comment>
<comment type="catalytic activity">
    <reaction evidence="1">
        <text>ATP + H2O + 4 H(+)(in) = ADP + phosphate + 5 H(+)(out)</text>
        <dbReference type="Rhea" id="RHEA:57720"/>
        <dbReference type="ChEBI" id="CHEBI:15377"/>
        <dbReference type="ChEBI" id="CHEBI:15378"/>
        <dbReference type="ChEBI" id="CHEBI:30616"/>
        <dbReference type="ChEBI" id="CHEBI:43474"/>
        <dbReference type="ChEBI" id="CHEBI:456216"/>
        <dbReference type="EC" id="7.1.2.2"/>
    </reaction>
</comment>
<comment type="subunit">
    <text evidence="1">F-type ATPases have 2 components, CF(1) - the catalytic core - and CF(0) - the membrane proton channel. CF(1) has five subunits: alpha(3), beta(3), gamma(1), delta(1), epsilon(1). CF(0) has three main subunits: a(1), b(2) and c(9-12). The alpha and beta chains form an alternating ring which encloses part of the gamma chain. CF(1) is attached to CF(0) by a central stalk formed by the gamma and epsilon chains, while a peripheral stalk is formed by the delta and b chains.</text>
</comment>
<comment type="subcellular location">
    <subcellularLocation>
        <location evidence="1">Cell inner membrane</location>
        <topology evidence="1">Peripheral membrane protein</topology>
    </subcellularLocation>
</comment>
<comment type="similarity">
    <text evidence="1">Belongs to the ATPase alpha/beta chains family.</text>
</comment>
<accession>B5ZSN7</accession>
<sequence>MAEAATPKIGSVGRVTQVIGAVVDVAFEGELPKILNALETTNNGVRLVLEVAQHLGENEVRTIAMDSSEGLVRGQEVSDTGAPIMVPVGNETLGRIMNVIGEPVDEAGPLVTAHKRAIHQDAPSYVEQSTEAQILVTGIKVVDLLAPYARGGKIGLFGGAGVGKTVLIMELINNVAKAHGGYSVFAGVGERTREGNDLYHEMIESNVNKHGGGEGSKAALVYGQMNEPPGARARVALTGLTVAEHFRDQGQDVLFFVDNIFRFTQAGSEVSALLGRIPSAVGYQPTLATDMGQMQERITTTTTGSITSVQAIYVPADDLTDPAPATSFAHLDATTVLSRSIAEKGIYPAVDPLDSTSRMLDPMVVGEEHYEVARKVQSTLQRYKALQDIIAILGMDELSEEDKIAVARARKIERFLSQPFFVAEVFTGSPGKLVALEDTIKGFKGLVNGEYDHLPEAAFYMVGSMEEAIEKAKKLAAA</sequence>
<gene>
    <name evidence="1" type="primary">atpD</name>
    <name type="ordered locus">Rleg2_3652</name>
</gene>
<evidence type="ECO:0000255" key="1">
    <source>
        <dbReference type="HAMAP-Rule" id="MF_01347"/>
    </source>
</evidence>